<organism>
    <name type="scientific">Homo sapiens</name>
    <name type="common">Human</name>
    <dbReference type="NCBI Taxonomy" id="9606"/>
    <lineage>
        <taxon>Eukaryota</taxon>
        <taxon>Metazoa</taxon>
        <taxon>Chordata</taxon>
        <taxon>Craniata</taxon>
        <taxon>Vertebrata</taxon>
        <taxon>Euteleostomi</taxon>
        <taxon>Mammalia</taxon>
        <taxon>Eutheria</taxon>
        <taxon>Euarchontoglires</taxon>
        <taxon>Primates</taxon>
        <taxon>Haplorrhini</taxon>
        <taxon>Catarrhini</taxon>
        <taxon>Hominidae</taxon>
        <taxon>Homo</taxon>
    </lineage>
</organism>
<comment type="function">
    <text>Acts upon elastin.</text>
</comment>
<comment type="catalytic activity">
    <reaction>
        <text>Preferential cleavage: Leu-|-Xaa, Met-|-Xaa and Phe-|-Xaa. Hydrolyzes elastin.</text>
        <dbReference type="EC" id="3.4.21.71"/>
    </reaction>
</comment>
<comment type="interaction">
    <interactant intactId="EBI-11478642">
        <id>P08218</id>
    </interactant>
    <interactant intactId="EBI-739580">
        <id>Q13137</id>
        <label>CALCOCO2</label>
    </interactant>
    <organismsDiffer>false</organismsDiffer>
    <experiments>3</experiments>
</comment>
<comment type="interaction">
    <interactant intactId="EBI-11478642">
        <id>P08218</id>
    </interactant>
    <interactant intactId="EBI-9996449">
        <id>Q9BYR8</id>
        <label>KRTAP3-1</label>
    </interactant>
    <organismsDiffer>false</organismsDiffer>
    <experiments>3</experiments>
</comment>
<comment type="interaction">
    <interactant intactId="EBI-11478642">
        <id>P08218</id>
    </interactant>
    <interactant intactId="EBI-12837904">
        <id>Q96MV8</id>
        <label>ZDHHC15</label>
    </interactant>
    <organismsDiffer>false</organismsDiffer>
    <experiments>3</experiments>
</comment>
<comment type="subcellular location">
    <subcellularLocation>
        <location>Secreted</location>
    </subcellularLocation>
</comment>
<comment type="tissue specificity">
    <text>Pancreas.</text>
</comment>
<comment type="similarity">
    <text evidence="2">Belongs to the peptidase S1 family. Elastase subfamily.</text>
</comment>
<reference key="1">
    <citation type="journal article" date="1987" name="DNA">
        <title>Characterization of pancreatic elastase II cDNAs: two elastase II mRNAs are expressed in human pancreas.</title>
        <authorList>
            <person name="Kawashima I."/>
            <person name="Tani T."/>
            <person name="Shimoda K."/>
            <person name="Takiguchi Y."/>
        </authorList>
    </citation>
    <scope>NUCLEOTIDE SEQUENCE [MRNA]</scope>
    <scope>VARIANTS ARG-79; ASN-114 AND ARG-177</scope>
</reference>
<reference key="2">
    <citation type="journal article" date="2006" name="Nature">
        <title>The DNA sequence and biological annotation of human chromosome 1.</title>
        <authorList>
            <person name="Gregory S.G."/>
            <person name="Barlow K.F."/>
            <person name="McLay K.E."/>
            <person name="Kaul R."/>
            <person name="Swarbreck D."/>
            <person name="Dunham A."/>
            <person name="Scott C.E."/>
            <person name="Howe K.L."/>
            <person name="Woodfine K."/>
            <person name="Spencer C.C.A."/>
            <person name="Jones M.C."/>
            <person name="Gillson C."/>
            <person name="Searle S."/>
            <person name="Zhou Y."/>
            <person name="Kokocinski F."/>
            <person name="McDonald L."/>
            <person name="Evans R."/>
            <person name="Phillips K."/>
            <person name="Atkinson A."/>
            <person name="Cooper R."/>
            <person name="Jones C."/>
            <person name="Hall R.E."/>
            <person name="Andrews T.D."/>
            <person name="Lloyd C."/>
            <person name="Ainscough R."/>
            <person name="Almeida J.P."/>
            <person name="Ambrose K.D."/>
            <person name="Anderson F."/>
            <person name="Andrew R.W."/>
            <person name="Ashwell R.I.S."/>
            <person name="Aubin K."/>
            <person name="Babbage A.K."/>
            <person name="Bagguley C.L."/>
            <person name="Bailey J."/>
            <person name="Beasley H."/>
            <person name="Bethel G."/>
            <person name="Bird C.P."/>
            <person name="Bray-Allen S."/>
            <person name="Brown J.Y."/>
            <person name="Brown A.J."/>
            <person name="Buckley D."/>
            <person name="Burton J."/>
            <person name="Bye J."/>
            <person name="Carder C."/>
            <person name="Chapman J.C."/>
            <person name="Clark S.Y."/>
            <person name="Clarke G."/>
            <person name="Clee C."/>
            <person name="Cobley V."/>
            <person name="Collier R.E."/>
            <person name="Corby N."/>
            <person name="Coville G.J."/>
            <person name="Davies J."/>
            <person name="Deadman R."/>
            <person name="Dunn M."/>
            <person name="Earthrowl M."/>
            <person name="Ellington A.G."/>
            <person name="Errington H."/>
            <person name="Frankish A."/>
            <person name="Frankland J."/>
            <person name="French L."/>
            <person name="Garner P."/>
            <person name="Garnett J."/>
            <person name="Gay L."/>
            <person name="Ghori M.R.J."/>
            <person name="Gibson R."/>
            <person name="Gilby L.M."/>
            <person name="Gillett W."/>
            <person name="Glithero R.J."/>
            <person name="Grafham D.V."/>
            <person name="Griffiths C."/>
            <person name="Griffiths-Jones S."/>
            <person name="Grocock R."/>
            <person name="Hammond S."/>
            <person name="Harrison E.S.I."/>
            <person name="Hart E."/>
            <person name="Haugen E."/>
            <person name="Heath P.D."/>
            <person name="Holmes S."/>
            <person name="Holt K."/>
            <person name="Howden P.J."/>
            <person name="Hunt A.R."/>
            <person name="Hunt S.E."/>
            <person name="Hunter G."/>
            <person name="Isherwood J."/>
            <person name="James R."/>
            <person name="Johnson C."/>
            <person name="Johnson D."/>
            <person name="Joy A."/>
            <person name="Kay M."/>
            <person name="Kershaw J.K."/>
            <person name="Kibukawa M."/>
            <person name="Kimberley A.M."/>
            <person name="King A."/>
            <person name="Knights A.J."/>
            <person name="Lad H."/>
            <person name="Laird G."/>
            <person name="Lawlor S."/>
            <person name="Leongamornlert D.A."/>
            <person name="Lloyd D.M."/>
            <person name="Loveland J."/>
            <person name="Lovell J."/>
            <person name="Lush M.J."/>
            <person name="Lyne R."/>
            <person name="Martin S."/>
            <person name="Mashreghi-Mohammadi M."/>
            <person name="Matthews L."/>
            <person name="Matthews N.S.W."/>
            <person name="McLaren S."/>
            <person name="Milne S."/>
            <person name="Mistry S."/>
            <person name="Moore M.J.F."/>
            <person name="Nickerson T."/>
            <person name="O'Dell C.N."/>
            <person name="Oliver K."/>
            <person name="Palmeiri A."/>
            <person name="Palmer S.A."/>
            <person name="Parker A."/>
            <person name="Patel D."/>
            <person name="Pearce A.V."/>
            <person name="Peck A.I."/>
            <person name="Pelan S."/>
            <person name="Phelps K."/>
            <person name="Phillimore B.J."/>
            <person name="Plumb R."/>
            <person name="Rajan J."/>
            <person name="Raymond C."/>
            <person name="Rouse G."/>
            <person name="Saenphimmachak C."/>
            <person name="Sehra H.K."/>
            <person name="Sheridan E."/>
            <person name="Shownkeen R."/>
            <person name="Sims S."/>
            <person name="Skuce C.D."/>
            <person name="Smith M."/>
            <person name="Steward C."/>
            <person name="Subramanian S."/>
            <person name="Sycamore N."/>
            <person name="Tracey A."/>
            <person name="Tromans A."/>
            <person name="Van Helmond Z."/>
            <person name="Wall M."/>
            <person name="Wallis J.M."/>
            <person name="White S."/>
            <person name="Whitehead S.L."/>
            <person name="Wilkinson J.E."/>
            <person name="Willey D.L."/>
            <person name="Williams H."/>
            <person name="Wilming L."/>
            <person name="Wray P.W."/>
            <person name="Wu Z."/>
            <person name="Coulson A."/>
            <person name="Vaudin M."/>
            <person name="Sulston J.E."/>
            <person name="Durbin R.M."/>
            <person name="Hubbard T."/>
            <person name="Wooster R."/>
            <person name="Dunham I."/>
            <person name="Carter N.P."/>
            <person name="McVean G."/>
            <person name="Ross M.T."/>
            <person name="Harrow J."/>
            <person name="Olson M.V."/>
            <person name="Beck S."/>
            <person name="Rogers J."/>
            <person name="Bentley D.R."/>
        </authorList>
    </citation>
    <scope>NUCLEOTIDE SEQUENCE [LARGE SCALE GENOMIC DNA]</scope>
</reference>
<reference key="3">
    <citation type="submission" date="2005-07" db="EMBL/GenBank/DDBJ databases">
        <authorList>
            <person name="Mural R.J."/>
            <person name="Istrail S."/>
            <person name="Sutton G.G."/>
            <person name="Florea L."/>
            <person name="Halpern A.L."/>
            <person name="Mobarry C.M."/>
            <person name="Lippert R."/>
            <person name="Walenz B."/>
            <person name="Shatkay H."/>
            <person name="Dew I."/>
            <person name="Miller J.R."/>
            <person name="Flanigan M.J."/>
            <person name="Edwards N.J."/>
            <person name="Bolanos R."/>
            <person name="Fasulo D."/>
            <person name="Halldorsson B.V."/>
            <person name="Hannenhalli S."/>
            <person name="Turner R."/>
            <person name="Yooseph S."/>
            <person name="Lu F."/>
            <person name="Nusskern D.R."/>
            <person name="Shue B.C."/>
            <person name="Zheng X.H."/>
            <person name="Zhong F."/>
            <person name="Delcher A.L."/>
            <person name="Huson D.H."/>
            <person name="Kravitz S.A."/>
            <person name="Mouchard L."/>
            <person name="Reinert K."/>
            <person name="Remington K.A."/>
            <person name="Clark A.G."/>
            <person name="Waterman M.S."/>
            <person name="Eichler E.E."/>
            <person name="Adams M.D."/>
            <person name="Hunkapiller M.W."/>
            <person name="Myers E.W."/>
            <person name="Venter J.C."/>
        </authorList>
    </citation>
    <scope>NUCLEOTIDE SEQUENCE [LARGE SCALE GENOMIC DNA]</scope>
</reference>
<reference key="4">
    <citation type="journal article" date="2004" name="Genome Res.">
        <title>The status, quality, and expansion of the NIH full-length cDNA project: the Mammalian Gene Collection (MGC).</title>
        <authorList>
            <consortium name="The MGC Project Team"/>
        </authorList>
    </citation>
    <scope>NUCLEOTIDE SEQUENCE [LARGE SCALE MRNA]</scope>
    <scope>VARIANTS ARG-79; ASN-114 AND ARG-177</scope>
</reference>
<proteinExistence type="evidence at protein level"/>
<gene>
    <name type="primary">CELA2B</name>
    <name type="synonym">ELA2B</name>
</gene>
<keyword id="KW-1015">Disulfide bond</keyword>
<keyword id="KW-0378">Hydrolase</keyword>
<keyword id="KW-0645">Protease</keyword>
<keyword id="KW-1267">Proteomics identification</keyword>
<keyword id="KW-1185">Reference proteome</keyword>
<keyword id="KW-0964">Secreted</keyword>
<keyword id="KW-0720">Serine protease</keyword>
<keyword id="KW-0732">Signal</keyword>
<keyword id="KW-0865">Zymogen</keyword>
<evidence type="ECO:0000250" key="1"/>
<evidence type="ECO:0000255" key="2">
    <source>
        <dbReference type="PROSITE-ProRule" id="PRU00274"/>
    </source>
</evidence>
<evidence type="ECO:0000269" key="3">
    <source>
    </source>
</evidence>
<evidence type="ECO:0000269" key="4">
    <source>
    </source>
</evidence>
<protein>
    <recommendedName>
        <fullName>Chymotrypsin-like elastase family member 2B</fullName>
        <ecNumber>3.4.21.71</ecNumber>
    </recommendedName>
    <alternativeName>
        <fullName>Elastase-2B</fullName>
    </alternativeName>
</protein>
<dbReference type="EC" id="3.4.21.71"/>
<dbReference type="EMBL" id="M16653">
    <property type="protein sequence ID" value="AAA52381.1"/>
    <property type="molecule type" value="mRNA"/>
</dbReference>
<dbReference type="EMBL" id="AL512883">
    <property type="status" value="NOT_ANNOTATED_CDS"/>
    <property type="molecule type" value="Genomic_DNA"/>
</dbReference>
<dbReference type="EMBL" id="CH471167">
    <property type="protein sequence ID" value="EAW51728.1"/>
    <property type="molecule type" value="Genomic_DNA"/>
</dbReference>
<dbReference type="EMBL" id="BC069455">
    <property type="protein sequence ID" value="AAH69455.1"/>
    <property type="molecule type" value="mRNA"/>
</dbReference>
<dbReference type="EMBL" id="BC113540">
    <property type="protein sequence ID" value="AAI13541.1"/>
    <property type="molecule type" value="mRNA"/>
</dbReference>
<dbReference type="EMBL" id="BC113542">
    <property type="protein sequence ID" value="AAI13543.1"/>
    <property type="molecule type" value="mRNA"/>
</dbReference>
<dbReference type="CCDS" id="CCDS30605.1"/>
<dbReference type="PIR" id="C26823">
    <property type="entry name" value="C26823"/>
</dbReference>
<dbReference type="RefSeq" id="NP_056933.3">
    <property type="nucleotide sequence ID" value="NM_015849.3"/>
</dbReference>
<dbReference type="SMR" id="P08218"/>
<dbReference type="BioGRID" id="119238">
    <property type="interactions" value="43"/>
</dbReference>
<dbReference type="FunCoup" id="P08218">
    <property type="interactions" value="263"/>
</dbReference>
<dbReference type="IntAct" id="P08218">
    <property type="interactions" value="30"/>
</dbReference>
<dbReference type="MINT" id="P08218"/>
<dbReference type="STRING" id="9606.ENSP00000365075"/>
<dbReference type="MEROPS" id="S01.206"/>
<dbReference type="BioMuta" id="CELA2B"/>
<dbReference type="DMDM" id="212288098"/>
<dbReference type="MassIVE" id="P08218"/>
<dbReference type="PaxDb" id="9606-ENSP00000365075"/>
<dbReference type="PeptideAtlas" id="P08218"/>
<dbReference type="ProteomicsDB" id="52087"/>
<dbReference type="Antibodypedia" id="53459">
    <property type="antibodies" value="7 antibodies from 6 providers"/>
</dbReference>
<dbReference type="DNASU" id="51032"/>
<dbReference type="Ensembl" id="ENST00000375910.8">
    <property type="protein sequence ID" value="ENSP00000365075.3"/>
    <property type="gene ID" value="ENSG00000215704.10"/>
</dbReference>
<dbReference type="GeneID" id="51032"/>
<dbReference type="KEGG" id="hsa:51032"/>
<dbReference type="MANE-Select" id="ENST00000375910.8">
    <property type="protein sequence ID" value="ENSP00000365075.3"/>
    <property type="RefSeq nucleotide sequence ID" value="NM_015849.3"/>
    <property type="RefSeq protein sequence ID" value="NP_056933.3"/>
</dbReference>
<dbReference type="UCSC" id="uc001awl.3">
    <property type="organism name" value="human"/>
</dbReference>
<dbReference type="AGR" id="HGNC:29995"/>
<dbReference type="CTD" id="51032"/>
<dbReference type="DisGeNET" id="51032"/>
<dbReference type="GeneCards" id="CELA2B"/>
<dbReference type="HGNC" id="HGNC:29995">
    <property type="gene designation" value="CELA2B"/>
</dbReference>
<dbReference type="HPA" id="ENSG00000215704">
    <property type="expression patterns" value="Tissue enriched (pancreas)"/>
</dbReference>
<dbReference type="MIM" id="609444">
    <property type="type" value="gene"/>
</dbReference>
<dbReference type="neXtProt" id="NX_P08218"/>
<dbReference type="OpenTargets" id="ENSG00000215704"/>
<dbReference type="PharmGKB" id="PA165750841"/>
<dbReference type="VEuPathDB" id="HostDB:ENSG00000215704"/>
<dbReference type="eggNOG" id="KOG3627">
    <property type="taxonomic scope" value="Eukaryota"/>
</dbReference>
<dbReference type="GeneTree" id="ENSGT01030000234528"/>
<dbReference type="HOGENOM" id="CLU_006842_0_4_1"/>
<dbReference type="InParanoid" id="P08218"/>
<dbReference type="OMA" id="GWGQTCP"/>
<dbReference type="OrthoDB" id="10061449at2759"/>
<dbReference type="PAN-GO" id="P08218">
    <property type="GO annotations" value="3 GO annotations based on evolutionary models"/>
</dbReference>
<dbReference type="PhylomeDB" id="P08218"/>
<dbReference type="TreeFam" id="TF330455"/>
<dbReference type="PathwayCommons" id="P08218"/>
<dbReference type="SignaLink" id="P08218"/>
<dbReference type="BioGRID-ORCS" id="51032">
    <property type="hits" value="7 hits in 1142 CRISPR screens"/>
</dbReference>
<dbReference type="GeneWiki" id="CELA2B"/>
<dbReference type="GenomeRNAi" id="51032"/>
<dbReference type="Pharos" id="P08218">
    <property type="development level" value="Tdark"/>
</dbReference>
<dbReference type="PRO" id="PR:P08218"/>
<dbReference type="Proteomes" id="UP000005640">
    <property type="component" value="Chromosome 1"/>
</dbReference>
<dbReference type="RNAct" id="P08218">
    <property type="molecule type" value="protein"/>
</dbReference>
<dbReference type="Bgee" id="ENSG00000215704">
    <property type="expression patterns" value="Expressed in body of pancreas and 95 other cell types or tissues"/>
</dbReference>
<dbReference type="ExpressionAtlas" id="P08218">
    <property type="expression patterns" value="baseline and differential"/>
</dbReference>
<dbReference type="GO" id="GO:0005576">
    <property type="term" value="C:extracellular region"/>
    <property type="evidence" value="ECO:0000304"/>
    <property type="project" value="ProtInc"/>
</dbReference>
<dbReference type="GO" id="GO:0005615">
    <property type="term" value="C:extracellular space"/>
    <property type="evidence" value="ECO:0000318"/>
    <property type="project" value="GO_Central"/>
</dbReference>
<dbReference type="GO" id="GO:0004252">
    <property type="term" value="F:serine-type endopeptidase activity"/>
    <property type="evidence" value="ECO:0000318"/>
    <property type="project" value="GO_Central"/>
</dbReference>
<dbReference type="GO" id="GO:0006508">
    <property type="term" value="P:proteolysis"/>
    <property type="evidence" value="ECO:0000318"/>
    <property type="project" value="GO_Central"/>
</dbReference>
<dbReference type="CDD" id="cd00190">
    <property type="entry name" value="Tryp_SPc"/>
    <property type="match status" value="1"/>
</dbReference>
<dbReference type="FunFam" id="2.40.10.10:FF:000280">
    <property type="match status" value="1"/>
</dbReference>
<dbReference type="FunFam" id="2.40.10.10:FF:000004">
    <property type="entry name" value="Tryptase gamma 1"/>
    <property type="match status" value="1"/>
</dbReference>
<dbReference type="Gene3D" id="2.40.10.10">
    <property type="entry name" value="Trypsin-like serine proteases"/>
    <property type="match status" value="2"/>
</dbReference>
<dbReference type="InterPro" id="IPR050850">
    <property type="entry name" value="Peptidase_S1_Elastase_sf"/>
</dbReference>
<dbReference type="InterPro" id="IPR009003">
    <property type="entry name" value="Peptidase_S1_PA"/>
</dbReference>
<dbReference type="InterPro" id="IPR043504">
    <property type="entry name" value="Peptidase_S1_PA_chymotrypsin"/>
</dbReference>
<dbReference type="InterPro" id="IPR001314">
    <property type="entry name" value="Peptidase_S1A"/>
</dbReference>
<dbReference type="InterPro" id="IPR001254">
    <property type="entry name" value="Trypsin_dom"/>
</dbReference>
<dbReference type="InterPro" id="IPR018114">
    <property type="entry name" value="TRYPSIN_HIS"/>
</dbReference>
<dbReference type="InterPro" id="IPR033116">
    <property type="entry name" value="TRYPSIN_SER"/>
</dbReference>
<dbReference type="PANTHER" id="PTHR24257">
    <property type="entry name" value="CHYMOTRYPSIN-LIKE ELASTASE FAMILY MEMBER"/>
    <property type="match status" value="1"/>
</dbReference>
<dbReference type="PANTHER" id="PTHR24257:SF19">
    <property type="entry name" value="CHYMOTRYPSIN-LIKE ELASTASE FAMILY MEMBER 2B"/>
    <property type="match status" value="1"/>
</dbReference>
<dbReference type="Pfam" id="PF00089">
    <property type="entry name" value="Trypsin"/>
    <property type="match status" value="1"/>
</dbReference>
<dbReference type="PRINTS" id="PR00722">
    <property type="entry name" value="CHYMOTRYPSIN"/>
</dbReference>
<dbReference type="SMART" id="SM00020">
    <property type="entry name" value="Tryp_SPc"/>
    <property type="match status" value="1"/>
</dbReference>
<dbReference type="SUPFAM" id="SSF50494">
    <property type="entry name" value="Trypsin-like serine proteases"/>
    <property type="match status" value="1"/>
</dbReference>
<dbReference type="PROSITE" id="PS50240">
    <property type="entry name" value="TRYPSIN_DOM"/>
    <property type="match status" value="1"/>
</dbReference>
<dbReference type="PROSITE" id="PS00134">
    <property type="entry name" value="TRYPSIN_HIS"/>
    <property type="match status" value="1"/>
</dbReference>
<dbReference type="PROSITE" id="PS00135">
    <property type="entry name" value="TRYPSIN_SER"/>
    <property type="match status" value="1"/>
</dbReference>
<name>CEL2B_HUMAN</name>
<accession>P08218</accession>
<accession>Q14D16</accession>
<accession>Q6ISM5</accession>
<accession>Q96QV5</accession>
<feature type="signal peptide">
    <location>
        <begin position="1"/>
        <end position="16"/>
    </location>
</feature>
<feature type="propeptide" id="PRO_0000027695" description="Activation peptide">
    <location>
        <begin position="17"/>
        <end position="28"/>
    </location>
</feature>
<feature type="chain" id="PRO_0000027696" description="Chymotrypsin-like elastase family member 2B">
    <location>
        <begin position="29"/>
        <end position="269"/>
    </location>
</feature>
<feature type="domain" description="Peptidase S1" evidence="2">
    <location>
        <begin position="29"/>
        <end position="267"/>
    </location>
</feature>
<feature type="active site" description="Charge relay system" evidence="1">
    <location>
        <position position="73"/>
    </location>
</feature>
<feature type="active site" description="Charge relay system" evidence="1">
    <location>
        <position position="121"/>
    </location>
</feature>
<feature type="active site" description="Charge relay system" evidence="1">
    <location>
        <position position="216"/>
    </location>
</feature>
<feature type="disulfide bond" evidence="2">
    <location>
        <begin position="58"/>
        <end position="74"/>
    </location>
</feature>
<feature type="disulfide bond" evidence="2">
    <location>
        <begin position="155"/>
        <end position="222"/>
    </location>
</feature>
<feature type="disulfide bond" evidence="2">
    <location>
        <begin position="186"/>
        <end position="202"/>
    </location>
</feature>
<feature type="disulfide bond" evidence="2">
    <location>
        <begin position="212"/>
        <end position="243"/>
    </location>
</feature>
<feature type="sequence variant" id="VAR_044534" description="In dbSNP:rs3820071." evidence="3 4">
    <original>G</original>
    <variation>R</variation>
    <location>
        <position position="79"/>
    </location>
</feature>
<feature type="sequence variant" id="VAR_044535" description="In dbSNP:rs3766160." evidence="3 4">
    <original>D</original>
    <variation>N</variation>
    <location>
        <position position="114"/>
    </location>
</feature>
<feature type="sequence variant" id="VAR_044536" description="In dbSNP:rs6429745." evidence="3 4">
    <original>Q</original>
    <variation>R</variation>
    <location>
        <position position="177"/>
    </location>
</feature>
<feature type="sequence variant" id="VAR_044537" description="In dbSNP:rs3737703.">
    <original>G</original>
    <variation>S</variation>
    <location>
        <position position="235"/>
    </location>
</feature>
<sequence length="269" mass="28810">MIRTLLLSTLVAGALSCGVSTYAPDMSRMLGGEEARPNSWPWQVSLQYSSNGQWYHTCGGSLIANSWVLTAAHCISSSGIYRVMLGQHNLYVAESGSLAVSVSKIVVHKDWNSDQVSKGNDIALLKLANPVSLTDKIQLACLPPAGTILPNNYPCYVTGWGRLQTNGALPDDLKQGQLLVVDYATCSSSGWWGSTVKTNMICAGGDGVICTCNGDSGGPLNCQASDGRWEVHGIGSLTSVLGCNYYYKPSIFTRVSNYNDWINSVIANN</sequence>